<proteinExistence type="inferred from homology"/>
<feature type="chain" id="PRO_0000326599" description="Transcription factor E">
    <location>
        <begin position="1"/>
        <end position="175"/>
    </location>
</feature>
<feature type="domain" description="HTH TFE/IIEalpha-type" evidence="1">
    <location>
        <begin position="3"/>
        <end position="88"/>
    </location>
</feature>
<protein>
    <recommendedName>
        <fullName evidence="1">Transcription factor E</fullName>
        <shortName evidence="1">TFE</shortName>
    </recommendedName>
    <alternativeName>
        <fullName evidence="1">TFIIE subunit alpha homolog</fullName>
    </alternativeName>
    <alternativeName>
        <fullName evidence="1">Transcription initiation factor TFIIE</fullName>
    </alternativeName>
</protein>
<sequence length="175" mass="20869">MLENPLIQQVLFEIMDEDVVGFDVLSVLINTNEVTDDEISRQLDVKLNNIRRILYKLYEARLVDYNREKDEETNWYTYTWKPSLEKVPALVAKKMKNVLNGLKEQLNVEENNMFFFCSDCEIKFTFEDAMDSGFRCPQCGEMMYEYDNKKDISLLKEQIKYLEDEFNKNPLFSTY</sequence>
<reference key="1">
    <citation type="journal article" date="2004" name="J. Bacteriol.">
        <title>Complete genome sequence of the genetically tractable hydrogenotrophic methanogen Methanococcus maripaludis.</title>
        <authorList>
            <person name="Hendrickson E.L."/>
            <person name="Kaul R."/>
            <person name="Zhou Y."/>
            <person name="Bovee D."/>
            <person name="Chapman P."/>
            <person name="Chung J."/>
            <person name="Conway de Macario E."/>
            <person name="Dodsworth J.A."/>
            <person name="Gillett W."/>
            <person name="Graham D.E."/>
            <person name="Hackett M."/>
            <person name="Haydock A.K."/>
            <person name="Kang A."/>
            <person name="Land M.L."/>
            <person name="Levy R."/>
            <person name="Lie T.J."/>
            <person name="Major T.A."/>
            <person name="Moore B.C."/>
            <person name="Porat I."/>
            <person name="Palmeiri A."/>
            <person name="Rouse G."/>
            <person name="Saenphimmachak C."/>
            <person name="Soell D."/>
            <person name="Van Dien S."/>
            <person name="Wang T."/>
            <person name="Whitman W.B."/>
            <person name="Xia Q."/>
            <person name="Zhang Y."/>
            <person name="Larimer F.W."/>
            <person name="Olson M.V."/>
            <person name="Leigh J.A."/>
        </authorList>
    </citation>
    <scope>NUCLEOTIDE SEQUENCE [LARGE SCALE GENOMIC DNA]</scope>
    <source>
        <strain>DSM 14266 / JCM 13030 / NBRC 101832 / S2 / LL</strain>
    </source>
</reference>
<accession>Q6M181</accession>
<dbReference type="EMBL" id="BX950229">
    <property type="protein sequence ID" value="CAF29592.1"/>
    <property type="status" value="ALT_INIT"/>
    <property type="molecule type" value="Genomic_DNA"/>
</dbReference>
<dbReference type="SMR" id="Q6M181"/>
<dbReference type="STRING" id="267377.MMP0036"/>
<dbReference type="EnsemblBacteria" id="CAF29592">
    <property type="protein sequence ID" value="CAF29592"/>
    <property type="gene ID" value="MMP0036"/>
</dbReference>
<dbReference type="KEGG" id="mmp:MMP0036"/>
<dbReference type="PATRIC" id="fig|267377.15.peg.36"/>
<dbReference type="eggNOG" id="arCOG04270">
    <property type="taxonomic scope" value="Archaea"/>
</dbReference>
<dbReference type="HOGENOM" id="CLU_100097_0_0_2"/>
<dbReference type="Proteomes" id="UP000000590">
    <property type="component" value="Chromosome"/>
</dbReference>
<dbReference type="GO" id="GO:0003677">
    <property type="term" value="F:DNA binding"/>
    <property type="evidence" value="ECO:0007669"/>
    <property type="project" value="UniProtKB-KW"/>
</dbReference>
<dbReference type="GO" id="GO:0006355">
    <property type="term" value="P:regulation of DNA-templated transcription"/>
    <property type="evidence" value="ECO:0007669"/>
    <property type="project" value="InterPro"/>
</dbReference>
<dbReference type="GO" id="GO:0006367">
    <property type="term" value="P:transcription initiation at RNA polymerase II promoter"/>
    <property type="evidence" value="ECO:0007669"/>
    <property type="project" value="InterPro"/>
</dbReference>
<dbReference type="Gene3D" id="1.10.10.10">
    <property type="entry name" value="Winged helix-like DNA-binding domain superfamily/Winged helix DNA-binding domain"/>
    <property type="match status" value="1"/>
</dbReference>
<dbReference type="HAMAP" id="MF_01909">
    <property type="entry name" value="TFE_arch"/>
    <property type="match status" value="1"/>
</dbReference>
<dbReference type="InterPro" id="IPR016481">
    <property type="entry name" value="TF_E_archaea"/>
</dbReference>
<dbReference type="InterPro" id="IPR039997">
    <property type="entry name" value="TFE"/>
</dbReference>
<dbReference type="InterPro" id="IPR017919">
    <property type="entry name" value="TFIIE/TFIIEa_HTH"/>
</dbReference>
<dbReference type="InterPro" id="IPR002853">
    <property type="entry name" value="TFIIE_asu"/>
</dbReference>
<dbReference type="InterPro" id="IPR024550">
    <property type="entry name" value="TFIIEa/SarR/Rpc3_HTH_dom"/>
</dbReference>
<dbReference type="InterPro" id="IPR036388">
    <property type="entry name" value="WH-like_DNA-bd_sf"/>
</dbReference>
<dbReference type="InterPro" id="IPR036390">
    <property type="entry name" value="WH_DNA-bd_sf"/>
</dbReference>
<dbReference type="NCBIfam" id="NF004910">
    <property type="entry name" value="PRK06266.1"/>
    <property type="match status" value="1"/>
</dbReference>
<dbReference type="NCBIfam" id="TIGR00373">
    <property type="entry name" value="transcription factor E"/>
    <property type="match status" value="1"/>
</dbReference>
<dbReference type="PANTHER" id="PTHR13097:SF7">
    <property type="entry name" value="GENERAL TRANSCRIPTION FACTOR IIE SUBUNIT 1"/>
    <property type="match status" value="1"/>
</dbReference>
<dbReference type="PANTHER" id="PTHR13097">
    <property type="entry name" value="TRANSCRIPTION INITIATION FACTOR IIE, ALPHA SUBUNIT"/>
    <property type="match status" value="1"/>
</dbReference>
<dbReference type="Pfam" id="PF02002">
    <property type="entry name" value="TFIIE_alpha"/>
    <property type="match status" value="1"/>
</dbReference>
<dbReference type="PIRSF" id="PIRSF006373">
    <property type="entry name" value="TF_E_archaea"/>
    <property type="match status" value="1"/>
</dbReference>
<dbReference type="SMART" id="SM00531">
    <property type="entry name" value="TFIIE"/>
    <property type="match status" value="1"/>
</dbReference>
<dbReference type="SUPFAM" id="SSF46785">
    <property type="entry name" value="Winged helix' DNA-binding domain"/>
    <property type="match status" value="1"/>
</dbReference>
<dbReference type="PROSITE" id="PS51344">
    <property type="entry name" value="HTH_TFE_IIE"/>
    <property type="match status" value="1"/>
</dbReference>
<organism>
    <name type="scientific">Methanococcus maripaludis (strain DSM 14266 / JCM 13030 / NBRC 101832 / S2 / LL)</name>
    <dbReference type="NCBI Taxonomy" id="267377"/>
    <lineage>
        <taxon>Archaea</taxon>
        <taxon>Methanobacteriati</taxon>
        <taxon>Methanobacteriota</taxon>
        <taxon>Methanomada group</taxon>
        <taxon>Methanococci</taxon>
        <taxon>Methanococcales</taxon>
        <taxon>Methanococcaceae</taxon>
        <taxon>Methanococcus</taxon>
    </lineage>
</organism>
<evidence type="ECO:0000255" key="1">
    <source>
        <dbReference type="HAMAP-Rule" id="MF_01909"/>
    </source>
</evidence>
<evidence type="ECO:0000305" key="2"/>
<keyword id="KW-0238">DNA-binding</keyword>
<keyword id="KW-1185">Reference proteome</keyword>
<keyword id="KW-0804">Transcription</keyword>
<keyword id="KW-0805">Transcription regulation</keyword>
<gene>
    <name evidence="1" type="primary">tfe</name>
    <name type="ordered locus">MMP0036</name>
</gene>
<comment type="function">
    <text evidence="1">Transcription factor that plays a role in the activation of archaeal genes transcribed by RNA polymerase. Facilitates transcription initiation by enhancing TATA-box recognition by TATA-box-binding protein (Tbp), and transcription factor B (Tfb) and RNA polymerase recruitment. Not absolutely required for transcription in vitro, but particularly important in cases where Tbp or Tfb function is not optimal. It dynamically alters the nucleic acid-binding properties of RNA polymerases by stabilizing the initiation complex and destabilizing elongation complexes. Seems to translocate with the RNA polymerase following initiation and acts by binding to the non template strand of the transcription bubble in elongation complexes.</text>
</comment>
<comment type="subunit">
    <text evidence="1">Monomer. Interaction with RNA polymerase subunits RpoF and RpoE is necessary for Tfe stimulatory transcription activity. Able to interact with Tbp and RNA polymerase in the absence of DNA promoter. Interacts both with the preinitiation and elongation complexes.</text>
</comment>
<comment type="domain">
    <text evidence="1">The winged helix domain is involved in binding to DNA in the preinitiation complex.</text>
</comment>
<comment type="similarity">
    <text evidence="1">Belongs to the TFE family.</text>
</comment>
<comment type="sequence caution" evidence="2">
    <conflict type="erroneous initiation">
        <sequence resource="EMBL-CDS" id="CAF29592"/>
    </conflict>
</comment>
<name>TFE_METMP</name>